<proteinExistence type="inferred from homology"/>
<protein>
    <recommendedName>
        <fullName evidence="1">Translation factor GUF1 homolog, chloroplastic</fullName>
        <ecNumber>3.6.5.-</ecNumber>
    </recommendedName>
    <alternativeName>
        <fullName evidence="1">Elongation factor 4 homolog</fullName>
        <shortName evidence="1">EF-4</shortName>
    </alternativeName>
    <alternativeName>
        <fullName evidence="1">GTPase GUF1 homolog</fullName>
    </alternativeName>
    <alternativeName>
        <fullName evidence="1">Ribosomal back-translocase</fullName>
    </alternativeName>
</protein>
<organism>
    <name type="scientific">Vitis vinifera</name>
    <name type="common">Grape</name>
    <dbReference type="NCBI Taxonomy" id="29760"/>
    <lineage>
        <taxon>Eukaryota</taxon>
        <taxon>Viridiplantae</taxon>
        <taxon>Streptophyta</taxon>
        <taxon>Embryophyta</taxon>
        <taxon>Tracheophyta</taxon>
        <taxon>Spermatophyta</taxon>
        <taxon>Magnoliopsida</taxon>
        <taxon>eudicotyledons</taxon>
        <taxon>Gunneridae</taxon>
        <taxon>Pentapetalae</taxon>
        <taxon>rosids</taxon>
        <taxon>Vitales</taxon>
        <taxon>Vitaceae</taxon>
        <taxon>Viteae</taxon>
        <taxon>Vitis</taxon>
    </lineage>
</organism>
<reference key="1">
    <citation type="journal article" date="2007" name="PLoS ONE">
        <title>A high quality draft consensus sequence of the genome of a heterozygous grapevine variety.</title>
        <authorList>
            <person name="Velasco R."/>
            <person name="Zharkikh A."/>
            <person name="Troggio M."/>
            <person name="Cartwright D.A."/>
            <person name="Cestaro A."/>
            <person name="Pruss D."/>
            <person name="Pindo M."/>
            <person name="FitzGerald L.M."/>
            <person name="Vezzulli S."/>
            <person name="Reid J."/>
            <person name="Malacarne G."/>
            <person name="Iliev D."/>
            <person name="Coppola G."/>
            <person name="Wardell B."/>
            <person name="Micheletti D."/>
            <person name="Macalma T."/>
            <person name="Facci M."/>
            <person name="Mitchell J.T."/>
            <person name="Perazzolli M."/>
            <person name="Eldredge G."/>
            <person name="Gatto P."/>
            <person name="Oyzerski R."/>
            <person name="Moretto M."/>
            <person name="Gutin N."/>
            <person name="Stefanini M."/>
            <person name="Chen Y."/>
            <person name="Segala C."/>
            <person name="Davenport C."/>
            <person name="Dematte L."/>
            <person name="Mraz A."/>
            <person name="Battilana J."/>
            <person name="Stormo K."/>
            <person name="Costa F."/>
            <person name="Tao Q."/>
            <person name="Si-Ammour A."/>
            <person name="Harkins T."/>
            <person name="Lackey A."/>
            <person name="Perbost C."/>
            <person name="Taillon B."/>
            <person name="Stella A."/>
            <person name="Solovyev V."/>
            <person name="Fawcett J.A."/>
            <person name="Sterck L."/>
            <person name="Vandepoele K."/>
            <person name="Grando S.M."/>
            <person name="Toppo S."/>
            <person name="Moser C."/>
            <person name="Lanchbury J."/>
            <person name="Bogden R."/>
            <person name="Skolnick M."/>
            <person name="Sgaramella V."/>
            <person name="Bhatnagar S.K."/>
            <person name="Fontana P."/>
            <person name="Gutin A."/>
            <person name="Van de Peer Y."/>
            <person name="Salamini F."/>
            <person name="Viola R."/>
        </authorList>
    </citation>
    <scope>NUCLEOTIDE SEQUENCE [LARGE SCALE GENOMIC DNA]</scope>
    <source>
        <strain>cv. Pinot noir</strain>
    </source>
</reference>
<accession>A5B4D2</accession>
<evidence type="ECO:0000255" key="1">
    <source>
        <dbReference type="HAMAP-Rule" id="MF_03138"/>
    </source>
</evidence>
<gene>
    <name type="ORF">VITISV_013255</name>
</gene>
<dbReference type="EC" id="3.6.5.-"/>
<dbReference type="EMBL" id="AM446164">
    <property type="protein sequence ID" value="CAN60938.1"/>
    <property type="molecule type" value="Genomic_DNA"/>
</dbReference>
<dbReference type="PaxDb" id="29760-VIT_07s0031g03050.t01"/>
<dbReference type="eggNOG" id="KOG0462">
    <property type="taxonomic scope" value="Eukaryota"/>
</dbReference>
<dbReference type="ExpressionAtlas" id="A5B4D2">
    <property type="expression patterns" value="baseline and differential"/>
</dbReference>
<dbReference type="GO" id="GO:0009507">
    <property type="term" value="C:chloroplast"/>
    <property type="evidence" value="ECO:0007669"/>
    <property type="project" value="UniProtKB-SubCell"/>
</dbReference>
<dbReference type="GO" id="GO:0005525">
    <property type="term" value="F:GTP binding"/>
    <property type="evidence" value="ECO:0007669"/>
    <property type="project" value="UniProtKB-UniRule"/>
</dbReference>
<dbReference type="GO" id="GO:0003924">
    <property type="term" value="F:GTPase activity"/>
    <property type="evidence" value="ECO:0007669"/>
    <property type="project" value="UniProtKB-UniRule"/>
</dbReference>
<dbReference type="GO" id="GO:0045727">
    <property type="term" value="P:positive regulation of translation"/>
    <property type="evidence" value="ECO:0007669"/>
    <property type="project" value="UniProtKB-UniRule"/>
</dbReference>
<dbReference type="GO" id="GO:0006412">
    <property type="term" value="P:translation"/>
    <property type="evidence" value="ECO:0007669"/>
    <property type="project" value="UniProtKB-KW"/>
</dbReference>
<dbReference type="CDD" id="cd03699">
    <property type="entry name" value="EF4_II"/>
    <property type="match status" value="1"/>
</dbReference>
<dbReference type="CDD" id="cd16260">
    <property type="entry name" value="EF4_III"/>
    <property type="match status" value="1"/>
</dbReference>
<dbReference type="CDD" id="cd01890">
    <property type="entry name" value="LepA"/>
    <property type="match status" value="1"/>
</dbReference>
<dbReference type="CDD" id="cd03709">
    <property type="entry name" value="lepA_C"/>
    <property type="match status" value="1"/>
</dbReference>
<dbReference type="FunFam" id="3.40.50.300:FF:000078">
    <property type="entry name" value="Elongation factor 4"/>
    <property type="match status" value="1"/>
</dbReference>
<dbReference type="FunFam" id="2.40.30.10:FF:000015">
    <property type="entry name" value="Translation factor GUF1, mitochondrial"/>
    <property type="match status" value="1"/>
</dbReference>
<dbReference type="FunFam" id="3.30.70.240:FF:000007">
    <property type="entry name" value="Translation factor GUF1, mitochondrial"/>
    <property type="match status" value="1"/>
</dbReference>
<dbReference type="FunFam" id="3.30.70.2570:FF:000001">
    <property type="entry name" value="Translation factor GUF1, mitochondrial"/>
    <property type="match status" value="1"/>
</dbReference>
<dbReference type="FunFam" id="3.30.70.870:FF:000004">
    <property type="entry name" value="Translation factor GUF1, mitochondrial"/>
    <property type="match status" value="1"/>
</dbReference>
<dbReference type="Gene3D" id="3.30.70.240">
    <property type="match status" value="1"/>
</dbReference>
<dbReference type="Gene3D" id="3.30.70.2570">
    <property type="entry name" value="Elongation factor 4, C-terminal domain"/>
    <property type="match status" value="1"/>
</dbReference>
<dbReference type="Gene3D" id="3.30.70.870">
    <property type="entry name" value="Elongation Factor G (Translational Gtpase), domain 3"/>
    <property type="match status" value="1"/>
</dbReference>
<dbReference type="Gene3D" id="3.40.50.300">
    <property type="entry name" value="P-loop containing nucleotide triphosphate hydrolases"/>
    <property type="match status" value="1"/>
</dbReference>
<dbReference type="Gene3D" id="2.40.30.10">
    <property type="entry name" value="Translation factors"/>
    <property type="match status" value="1"/>
</dbReference>
<dbReference type="HAMAP" id="MF_03138">
    <property type="entry name" value="GUFP"/>
    <property type="match status" value="1"/>
</dbReference>
<dbReference type="HAMAP" id="MF_00071">
    <property type="entry name" value="LepA"/>
    <property type="match status" value="1"/>
</dbReference>
<dbReference type="InterPro" id="IPR006297">
    <property type="entry name" value="EF-4"/>
</dbReference>
<dbReference type="InterPro" id="IPR035647">
    <property type="entry name" value="EFG_III/V"/>
</dbReference>
<dbReference type="InterPro" id="IPR000640">
    <property type="entry name" value="EFG_V-like"/>
</dbReference>
<dbReference type="InterPro" id="IPR004161">
    <property type="entry name" value="EFTu-like_2"/>
</dbReference>
<dbReference type="InterPro" id="IPR031157">
    <property type="entry name" value="G_TR_CS"/>
</dbReference>
<dbReference type="InterPro" id="IPR027518">
    <property type="entry name" value="GUFP"/>
</dbReference>
<dbReference type="InterPro" id="IPR038363">
    <property type="entry name" value="LepA_C_sf"/>
</dbReference>
<dbReference type="InterPro" id="IPR013842">
    <property type="entry name" value="LepA_CTD"/>
</dbReference>
<dbReference type="InterPro" id="IPR035654">
    <property type="entry name" value="LepA_IV"/>
</dbReference>
<dbReference type="InterPro" id="IPR027417">
    <property type="entry name" value="P-loop_NTPase"/>
</dbReference>
<dbReference type="InterPro" id="IPR005225">
    <property type="entry name" value="Small_GTP-bd"/>
</dbReference>
<dbReference type="InterPro" id="IPR000795">
    <property type="entry name" value="T_Tr_GTP-bd_dom"/>
</dbReference>
<dbReference type="InterPro" id="IPR009000">
    <property type="entry name" value="Transl_B-barrel_sf"/>
</dbReference>
<dbReference type="NCBIfam" id="TIGR01393">
    <property type="entry name" value="lepA"/>
    <property type="match status" value="1"/>
</dbReference>
<dbReference type="NCBIfam" id="TIGR00231">
    <property type="entry name" value="small_GTP"/>
    <property type="match status" value="1"/>
</dbReference>
<dbReference type="PANTHER" id="PTHR43512:SF4">
    <property type="entry name" value="TRANSLATION FACTOR GUF1 HOMOLOG, CHLOROPLASTIC"/>
    <property type="match status" value="1"/>
</dbReference>
<dbReference type="PANTHER" id="PTHR43512">
    <property type="entry name" value="TRANSLATION FACTOR GUF1-RELATED"/>
    <property type="match status" value="1"/>
</dbReference>
<dbReference type="Pfam" id="PF00679">
    <property type="entry name" value="EFG_C"/>
    <property type="match status" value="1"/>
</dbReference>
<dbReference type="Pfam" id="PF00009">
    <property type="entry name" value="GTP_EFTU"/>
    <property type="match status" value="1"/>
</dbReference>
<dbReference type="Pfam" id="PF03144">
    <property type="entry name" value="GTP_EFTU_D2"/>
    <property type="match status" value="1"/>
</dbReference>
<dbReference type="Pfam" id="PF06421">
    <property type="entry name" value="LepA_C"/>
    <property type="match status" value="1"/>
</dbReference>
<dbReference type="PRINTS" id="PR00315">
    <property type="entry name" value="ELONGATNFCT"/>
</dbReference>
<dbReference type="SMART" id="SM00838">
    <property type="entry name" value="EFG_C"/>
    <property type="match status" value="1"/>
</dbReference>
<dbReference type="SUPFAM" id="SSF54980">
    <property type="entry name" value="EF-G C-terminal domain-like"/>
    <property type="match status" value="2"/>
</dbReference>
<dbReference type="SUPFAM" id="SSF52540">
    <property type="entry name" value="P-loop containing nucleoside triphosphate hydrolases"/>
    <property type="match status" value="1"/>
</dbReference>
<dbReference type="SUPFAM" id="SSF50447">
    <property type="entry name" value="Translation proteins"/>
    <property type="match status" value="1"/>
</dbReference>
<dbReference type="PROSITE" id="PS00301">
    <property type="entry name" value="G_TR_1"/>
    <property type="match status" value="1"/>
</dbReference>
<dbReference type="PROSITE" id="PS51722">
    <property type="entry name" value="G_TR_2"/>
    <property type="match status" value="1"/>
</dbReference>
<sequence length="680" mass="75697">MAAKINSLAALVSLQASHHHHXSTPFYFSPFSPHLSTTLTSRRRSLRSAVVAQSTAGTQSKAPSDVDLAAVSGQDRLLKVPISNIRNFCIIAHIDHGKSTLADKLLQMTGTVQKREMKEQFLDNMDLERERGITIKLQAARMRYVFENEPYCLNLIDTPGHVDFSYEVSRSLAACEGALLVVDASQGVEAQTLANVYLALENNLEIIPVLNKIDLPGAEPVRVSQEIEEVVGLDCSDAIHCSAKEGIGITEILNAIVKRIPPPCDTAERPLRALIFDSYYDPYRGVIVYFRVIDGTIKKGDRIYFMASKKDYFADEIGVLSPNQLQADELYAGEVGYLAASIRSVADARVGDTITHYGRKAENSLPGYEEATPMVFCGLFPVDADKFPDLRDALEKLQLNDAALKFEPETSSAMGFGFRCGFLGLLHMEIIQERLEREYNLTLITTAPSVVYRVNCINGDTVECSNPSLLPEPGKRTSIEEPYVKIEMLTPKDYIGPLMELAQDRRGEFKEMKFITENRASITYELPLAEMVGDFFDQLKSRSKGYASMEYSFLGYKESELIKLDIQINGERVEPLATIVHKDKAYAVGRALTQKLKELIPRQMFKVPIQACIGAKVIASESLSAIRKDVLSKCYGGDITRKKKLLKKQAEGKKRMKAIGKVDVPQEAFMAVLKLEKEVL</sequence>
<comment type="function">
    <text evidence="1">Promotes chloroplast protein synthesis. May act as a fidelity factor of the translation reaction, by catalyzing a one-codon backward translocation of tRNAs on improperly translocated ribosomes.</text>
</comment>
<comment type="catalytic activity">
    <reaction evidence="1">
        <text>GTP + H2O = GDP + phosphate + H(+)</text>
        <dbReference type="Rhea" id="RHEA:19669"/>
        <dbReference type="ChEBI" id="CHEBI:15377"/>
        <dbReference type="ChEBI" id="CHEBI:15378"/>
        <dbReference type="ChEBI" id="CHEBI:37565"/>
        <dbReference type="ChEBI" id="CHEBI:43474"/>
        <dbReference type="ChEBI" id="CHEBI:58189"/>
    </reaction>
</comment>
<comment type="subcellular location">
    <subcellularLocation>
        <location evidence="1">Plastid</location>
        <location evidence="1">Chloroplast</location>
    </subcellularLocation>
</comment>
<comment type="similarity">
    <text evidence="1">Belongs to the TRAFAC class translation factor GTPase superfamily. Classic translation factor GTPase family. LepA subfamily.</text>
</comment>
<name>GUFP_VITVI</name>
<feature type="transit peptide" description="Chloroplast" evidence="1">
    <location>
        <begin position="1"/>
        <end position="51"/>
    </location>
</feature>
<feature type="chain" id="PRO_0000402921" description="Translation factor GUF1 homolog, chloroplastic">
    <location>
        <begin position="52"/>
        <end position="680"/>
    </location>
</feature>
<feature type="domain" description="tr-type G">
    <location>
        <begin position="83"/>
        <end position="264"/>
    </location>
</feature>
<feature type="binding site" evidence="1">
    <location>
        <begin position="92"/>
        <end position="99"/>
    </location>
    <ligand>
        <name>GTP</name>
        <dbReference type="ChEBI" id="CHEBI:37565"/>
    </ligand>
</feature>
<feature type="binding site" evidence="1">
    <location>
        <begin position="157"/>
        <end position="161"/>
    </location>
    <ligand>
        <name>GTP</name>
        <dbReference type="ChEBI" id="CHEBI:37565"/>
    </ligand>
</feature>
<feature type="binding site" evidence="1">
    <location>
        <begin position="211"/>
        <end position="214"/>
    </location>
    <ligand>
        <name>GTP</name>
        <dbReference type="ChEBI" id="CHEBI:37565"/>
    </ligand>
</feature>
<keyword id="KW-0150">Chloroplast</keyword>
<keyword id="KW-0342">GTP-binding</keyword>
<keyword id="KW-0378">Hydrolase</keyword>
<keyword id="KW-0547">Nucleotide-binding</keyword>
<keyword id="KW-0934">Plastid</keyword>
<keyword id="KW-0648">Protein biosynthesis</keyword>
<keyword id="KW-0809">Transit peptide</keyword>